<keyword id="KW-0687">Ribonucleoprotein</keyword>
<keyword id="KW-0689">Ribosomal protein</keyword>
<dbReference type="EMBL" id="CP000943">
    <property type="protein sequence ID" value="ACA17786.1"/>
    <property type="molecule type" value="Genomic_DNA"/>
</dbReference>
<dbReference type="RefSeq" id="WP_012333185.1">
    <property type="nucleotide sequence ID" value="NC_010511.1"/>
</dbReference>
<dbReference type="SMR" id="B0U8L6"/>
<dbReference type="STRING" id="426117.M446_3396"/>
<dbReference type="KEGG" id="met:M446_3396"/>
<dbReference type="eggNOG" id="COG0335">
    <property type="taxonomic scope" value="Bacteria"/>
</dbReference>
<dbReference type="HOGENOM" id="CLU_103507_0_2_5"/>
<dbReference type="GO" id="GO:0022625">
    <property type="term" value="C:cytosolic large ribosomal subunit"/>
    <property type="evidence" value="ECO:0007669"/>
    <property type="project" value="TreeGrafter"/>
</dbReference>
<dbReference type="GO" id="GO:0003735">
    <property type="term" value="F:structural constituent of ribosome"/>
    <property type="evidence" value="ECO:0007669"/>
    <property type="project" value="InterPro"/>
</dbReference>
<dbReference type="GO" id="GO:0006412">
    <property type="term" value="P:translation"/>
    <property type="evidence" value="ECO:0007669"/>
    <property type="project" value="UniProtKB-UniRule"/>
</dbReference>
<dbReference type="FunFam" id="2.30.30.790:FF:000001">
    <property type="entry name" value="50S ribosomal protein L19"/>
    <property type="match status" value="1"/>
</dbReference>
<dbReference type="Gene3D" id="2.30.30.790">
    <property type="match status" value="1"/>
</dbReference>
<dbReference type="HAMAP" id="MF_00402">
    <property type="entry name" value="Ribosomal_bL19"/>
    <property type="match status" value="1"/>
</dbReference>
<dbReference type="InterPro" id="IPR001857">
    <property type="entry name" value="Ribosomal_bL19"/>
</dbReference>
<dbReference type="InterPro" id="IPR018257">
    <property type="entry name" value="Ribosomal_bL19_CS"/>
</dbReference>
<dbReference type="InterPro" id="IPR038657">
    <property type="entry name" value="Ribosomal_bL19_sf"/>
</dbReference>
<dbReference type="InterPro" id="IPR008991">
    <property type="entry name" value="Translation_prot_SH3-like_sf"/>
</dbReference>
<dbReference type="NCBIfam" id="TIGR01024">
    <property type="entry name" value="rplS_bact"/>
    <property type="match status" value="1"/>
</dbReference>
<dbReference type="PANTHER" id="PTHR15680:SF9">
    <property type="entry name" value="LARGE RIBOSOMAL SUBUNIT PROTEIN BL19M"/>
    <property type="match status" value="1"/>
</dbReference>
<dbReference type="PANTHER" id="PTHR15680">
    <property type="entry name" value="RIBOSOMAL PROTEIN L19"/>
    <property type="match status" value="1"/>
</dbReference>
<dbReference type="Pfam" id="PF01245">
    <property type="entry name" value="Ribosomal_L19"/>
    <property type="match status" value="1"/>
</dbReference>
<dbReference type="PIRSF" id="PIRSF002191">
    <property type="entry name" value="Ribosomal_L19"/>
    <property type="match status" value="1"/>
</dbReference>
<dbReference type="PRINTS" id="PR00061">
    <property type="entry name" value="RIBOSOMALL19"/>
</dbReference>
<dbReference type="SUPFAM" id="SSF50104">
    <property type="entry name" value="Translation proteins SH3-like domain"/>
    <property type="match status" value="1"/>
</dbReference>
<dbReference type="PROSITE" id="PS01015">
    <property type="entry name" value="RIBOSOMAL_L19"/>
    <property type="match status" value="1"/>
</dbReference>
<protein>
    <recommendedName>
        <fullName evidence="1">Large ribosomal subunit protein bL19</fullName>
    </recommendedName>
    <alternativeName>
        <fullName evidence="3">50S ribosomal protein L19</fullName>
    </alternativeName>
</protein>
<comment type="function">
    <text evidence="1">This protein is located at the 30S-50S ribosomal subunit interface and may play a role in the structure and function of the aminoacyl-tRNA binding site.</text>
</comment>
<comment type="similarity">
    <text evidence="1">Belongs to the bacterial ribosomal protein bL19 family.</text>
</comment>
<sequence>MNIIQQLEQEEIAKLNKTIPDFEPGDTVIVNVKVKEGERTRVQAYEGVCIGRSGSGLNENFTVRKISYGEGVERVFPIYSPMIDSIKVTRRGKVRRAKLYYLRDRRGKSARIAERAERGSDKGKAAPAAAE</sequence>
<gene>
    <name evidence="1" type="primary">rplS</name>
    <name type="ordered locus">M446_3396</name>
</gene>
<proteinExistence type="inferred from homology"/>
<organism>
    <name type="scientific">Methylobacterium sp. (strain 4-46)</name>
    <dbReference type="NCBI Taxonomy" id="426117"/>
    <lineage>
        <taxon>Bacteria</taxon>
        <taxon>Pseudomonadati</taxon>
        <taxon>Pseudomonadota</taxon>
        <taxon>Alphaproteobacteria</taxon>
        <taxon>Hyphomicrobiales</taxon>
        <taxon>Methylobacteriaceae</taxon>
        <taxon>Methylobacterium</taxon>
    </lineage>
</organism>
<evidence type="ECO:0000255" key="1">
    <source>
        <dbReference type="HAMAP-Rule" id="MF_00402"/>
    </source>
</evidence>
<evidence type="ECO:0000256" key="2">
    <source>
        <dbReference type="SAM" id="MobiDB-lite"/>
    </source>
</evidence>
<evidence type="ECO:0000305" key="3"/>
<name>RL19_METS4</name>
<reference key="1">
    <citation type="submission" date="2008-02" db="EMBL/GenBank/DDBJ databases">
        <title>Complete sequence of chromosome of Methylobacterium sp. 4-46.</title>
        <authorList>
            <consortium name="US DOE Joint Genome Institute"/>
            <person name="Copeland A."/>
            <person name="Lucas S."/>
            <person name="Lapidus A."/>
            <person name="Glavina del Rio T."/>
            <person name="Dalin E."/>
            <person name="Tice H."/>
            <person name="Bruce D."/>
            <person name="Goodwin L."/>
            <person name="Pitluck S."/>
            <person name="Chertkov O."/>
            <person name="Brettin T."/>
            <person name="Detter J.C."/>
            <person name="Han C."/>
            <person name="Kuske C.R."/>
            <person name="Schmutz J."/>
            <person name="Larimer F."/>
            <person name="Land M."/>
            <person name="Hauser L."/>
            <person name="Kyrpides N."/>
            <person name="Ivanova N."/>
            <person name="Marx C.J."/>
            <person name="Richardson P."/>
        </authorList>
    </citation>
    <scope>NUCLEOTIDE SEQUENCE [LARGE SCALE GENOMIC DNA]</scope>
    <source>
        <strain>4-46</strain>
    </source>
</reference>
<accession>B0U8L6</accession>
<feature type="chain" id="PRO_1000123341" description="Large ribosomal subunit protein bL19">
    <location>
        <begin position="1"/>
        <end position="131"/>
    </location>
</feature>
<feature type="region of interest" description="Disordered" evidence="2">
    <location>
        <begin position="107"/>
        <end position="131"/>
    </location>
</feature>
<feature type="compositionally biased region" description="Basic and acidic residues" evidence="2">
    <location>
        <begin position="111"/>
        <end position="124"/>
    </location>
</feature>